<accession>Q8YFD6</accession>
<name>Y1586_BRUME</name>
<sequence length="342" mass="36974">MRSTKVIHIVGCHAEGEVGDVIVGGVAPPPGETVWEQSRFIANDETLRNFVLNKPRGGVFRHVNLLVPPKDPRAQMGFIIMEPADTPPMSGSNSICVSTVLLDSGIIAMQEPVTHMVLEAPGGIIEVEAECRNGKAERISVRNVPSFADRLDAPLDVTGLGTIMVDTAYGGDSFVIVDAAQIGMKIEPGQARELAEIGVKITKAANEQLGFRHPERDWRHISFCQITEPVTREGDVLTGVNTVAIRPAKFDRSPTGTGCSARMAVLHAKGQMKAGERFIGKSVLGTEFHCRLDKVLELGGKPAISPIISGRAWVTGTSQLMLDPSDPFPHGYRLSDTWPRDE</sequence>
<proteinExistence type="evidence at protein level"/>
<feature type="chain" id="PRO_0000354042" description="Protein BMEI1586">
    <location>
        <begin position="1"/>
        <end position="342"/>
    </location>
</feature>
<feature type="active site" description="Proton acceptor" evidence="1">
    <location>
        <position position="90"/>
    </location>
</feature>
<feature type="binding site" evidence="1">
    <location>
        <begin position="91"/>
        <end position="92"/>
    </location>
    <ligand>
        <name>substrate</name>
    </ligand>
</feature>
<feature type="binding site" evidence="1">
    <location>
        <position position="251"/>
    </location>
    <ligand>
        <name>substrate</name>
    </ligand>
</feature>
<feature type="binding site" evidence="1">
    <location>
        <begin position="256"/>
        <end position="257"/>
    </location>
    <ligand>
        <name>substrate</name>
    </ligand>
</feature>
<feature type="strand" evidence="7">
    <location>
        <begin position="7"/>
        <end position="14"/>
    </location>
</feature>
<feature type="strand" evidence="7">
    <location>
        <begin position="20"/>
        <end position="25"/>
    </location>
</feature>
<feature type="strand" evidence="7">
    <location>
        <begin position="30"/>
        <end position="33"/>
    </location>
</feature>
<feature type="helix" evidence="7">
    <location>
        <begin position="34"/>
        <end position="44"/>
    </location>
</feature>
<feature type="helix" evidence="7">
    <location>
        <begin position="46"/>
        <end position="52"/>
    </location>
</feature>
<feature type="turn" evidence="7">
    <location>
        <begin position="54"/>
        <end position="56"/>
    </location>
</feature>
<feature type="strand" evidence="7">
    <location>
        <begin position="63"/>
        <end position="67"/>
    </location>
</feature>
<feature type="strand" evidence="7">
    <location>
        <begin position="71"/>
        <end position="73"/>
    </location>
</feature>
<feature type="strand" evidence="7">
    <location>
        <begin position="75"/>
        <end position="79"/>
    </location>
</feature>
<feature type="helix" evidence="7">
    <location>
        <begin position="91"/>
        <end position="103"/>
    </location>
</feature>
<feature type="strand" evidence="7">
    <location>
        <begin position="111"/>
        <end position="119"/>
    </location>
</feature>
<feature type="strand" evidence="7">
    <location>
        <begin position="124"/>
        <end position="131"/>
    </location>
</feature>
<feature type="strand" evidence="7">
    <location>
        <begin position="133"/>
        <end position="142"/>
    </location>
</feature>
<feature type="strand" evidence="7">
    <location>
        <begin position="146"/>
        <end position="148"/>
    </location>
</feature>
<feature type="strand" evidence="7">
    <location>
        <begin position="152"/>
        <end position="156"/>
    </location>
</feature>
<feature type="strand" evidence="7">
    <location>
        <begin position="158"/>
        <end position="178"/>
    </location>
</feature>
<feature type="helix" evidence="7">
    <location>
        <begin position="179"/>
        <end position="181"/>
    </location>
</feature>
<feature type="helix" evidence="7">
    <location>
        <begin position="188"/>
        <end position="202"/>
    </location>
</feature>
<feature type="strand" evidence="7">
    <location>
        <begin position="223"/>
        <end position="227"/>
    </location>
</feature>
<feature type="strand" evidence="7">
    <location>
        <begin position="231"/>
        <end position="239"/>
    </location>
</feature>
<feature type="helix" evidence="7">
    <location>
        <begin position="256"/>
        <end position="268"/>
    </location>
</feature>
<feature type="strand" evidence="7">
    <location>
        <begin position="277"/>
        <end position="280"/>
    </location>
</feature>
<feature type="strand" evidence="7">
    <location>
        <begin position="288"/>
        <end position="298"/>
    </location>
</feature>
<feature type="strand" evidence="7">
    <location>
        <begin position="301"/>
        <end position="310"/>
    </location>
</feature>
<feature type="strand" evidence="7">
    <location>
        <begin position="312"/>
        <end position="320"/>
    </location>
</feature>
<gene>
    <name type="ordered locus">BMEI1586</name>
</gene>
<evidence type="ECO:0000250" key="1">
    <source>
        <dbReference type="UniProtKB" id="B9K4G4"/>
    </source>
</evidence>
<evidence type="ECO:0000269" key="2">
    <source>
    </source>
</evidence>
<evidence type="ECO:0000269" key="3">
    <source>
    </source>
</evidence>
<evidence type="ECO:0000269" key="4">
    <source>
    </source>
</evidence>
<evidence type="ECO:0000305" key="5"/>
<evidence type="ECO:0000305" key="6">
    <source>
    </source>
</evidence>
<evidence type="ECO:0007829" key="7">
    <source>
        <dbReference type="PDB" id="1TM0"/>
    </source>
</evidence>
<reference key="1">
    <citation type="journal article" date="2002" name="Proc. Natl. Acad. Sci. U.S.A.">
        <title>The genome sequence of the facultative intracellular pathogen Brucella melitensis.</title>
        <authorList>
            <person name="DelVecchio V.G."/>
            <person name="Kapatral V."/>
            <person name="Redkar R.J."/>
            <person name="Patra G."/>
            <person name="Mujer C."/>
            <person name="Los T."/>
            <person name="Ivanova N."/>
            <person name="Anderson I."/>
            <person name="Bhattacharyya A."/>
            <person name="Lykidis A."/>
            <person name="Reznik G."/>
            <person name="Jablonski L."/>
            <person name="Larsen N."/>
            <person name="D'Souza M."/>
            <person name="Bernal A."/>
            <person name="Mazur M."/>
            <person name="Goltsman E."/>
            <person name="Selkov E."/>
            <person name="Elzer P.H."/>
            <person name="Hagius S."/>
            <person name="O'Callaghan D."/>
            <person name="Letesson J.-J."/>
            <person name="Haselkorn R."/>
            <person name="Kyrpides N.C."/>
            <person name="Overbeek R."/>
        </authorList>
    </citation>
    <scope>NUCLEOTIDE SEQUENCE [LARGE SCALE GENOMIC DNA]</scope>
    <source>
        <strain>ATCC 23456 / CCUG 17765 / NCTC 10094 / 16M</strain>
    </source>
</reference>
<reference key="2">
    <citation type="journal article" date="2007" name="PLoS ONE">
        <title>Molecular and structural discrimination of proline racemase and hydroxyproline-2-epimerase from nosocomial and bacterial pathogens.</title>
        <authorList>
            <person name="Goytia M."/>
            <person name="Chamond N."/>
            <person name="Cosson A."/>
            <person name="Coatnoan N."/>
            <person name="Hermant D."/>
            <person name="Berneman A."/>
            <person name="Minoprio P."/>
        </authorList>
    </citation>
    <scope>LACK OF ENZYMATIC ACTIVITY AS PROLINE RACEMASE AND HYDROXYPROLINE 2-EPIMERASE</scope>
    <source>
        <strain>ATCC 23456 / CCUG 17765 / NCTC 10094 / 16M</strain>
    </source>
</reference>
<reference key="3">
    <citation type="journal article" date="2014" name="Elife">
        <title>Prediction and characterization of enzymatic activities guided by sequence similarity and genome neighborhood networks.</title>
        <authorList>
            <person name="Zhao S."/>
            <person name="Sakai A."/>
            <person name="Zhang X."/>
            <person name="Vetting M.W."/>
            <person name="Kumar R."/>
            <person name="Hillerich B."/>
            <person name="San Francisco B."/>
            <person name="Solbiati J."/>
            <person name="Steves A."/>
            <person name="Brown S."/>
            <person name="Akiva E."/>
            <person name="Barber A."/>
            <person name="Seidel R.D."/>
            <person name="Babbitt P.C."/>
            <person name="Almo S.C."/>
            <person name="Gerlt J.A."/>
            <person name="Jacobson M.P."/>
        </authorList>
    </citation>
    <scope>FUNCTION</scope>
    <scope>CATALYTIC ACTIVITY</scope>
    <scope>BIOPHYSICOCHEMICAL PROPERTIES</scope>
</reference>
<reference key="4">
    <citation type="journal article" date="2007" name="J. Struct. Funct. Genomics">
        <title>Functional insights from structural genomics.</title>
        <authorList>
            <person name="Forouhar F."/>
            <person name="Kuzin A."/>
            <person name="Seetharaman J."/>
            <person name="Lee I."/>
            <person name="Zhou W."/>
            <person name="Abashidze M."/>
            <person name="Chen Y."/>
            <person name="Yong W."/>
            <person name="Janjua H."/>
            <person name="Fang Y."/>
            <person name="Wang D."/>
            <person name="Cunningham K."/>
            <person name="Xiao R."/>
            <person name="Acton T.B."/>
            <person name="Pichersky E."/>
            <person name="Klessig D.F."/>
            <person name="Porter C.W."/>
            <person name="Montelione G.T."/>
            <person name="Tong L."/>
        </authorList>
    </citation>
    <scope>X-RAY CRYSTALLOGRAPHY (2.8 ANGSTROMS)</scope>
    <scope>SUBUNIT</scope>
    <source>
        <strain>ATCC 23456 / CCUG 17765 / NCTC 10094 / 16M</strain>
    </source>
</reference>
<dbReference type="EC" id="5.1.1.8" evidence="4"/>
<dbReference type="EMBL" id="AE008917">
    <property type="protein sequence ID" value="AAL52767.1"/>
    <property type="molecule type" value="Genomic_DNA"/>
</dbReference>
<dbReference type="PIR" id="AD3450">
    <property type="entry name" value="AD3450"/>
</dbReference>
<dbReference type="RefSeq" id="WP_004682925.1">
    <property type="nucleotide sequence ID" value="NC_003317.1"/>
</dbReference>
<dbReference type="PDB" id="1TM0">
    <property type="method" value="X-ray"/>
    <property type="resolution" value="2.80 A"/>
    <property type="chains" value="A/B=1-342"/>
</dbReference>
<dbReference type="PDBsum" id="1TM0"/>
<dbReference type="SMR" id="Q8YFD6"/>
<dbReference type="GeneID" id="29594445"/>
<dbReference type="KEGG" id="bme:BMEI1586"/>
<dbReference type="KEGG" id="bmel:DK63_1903"/>
<dbReference type="PATRIC" id="fig|224914.52.peg.2003"/>
<dbReference type="eggNOG" id="COG3938">
    <property type="taxonomic scope" value="Bacteria"/>
</dbReference>
<dbReference type="PhylomeDB" id="Q8YFD6"/>
<dbReference type="SABIO-RK" id="Q8YFD6"/>
<dbReference type="EvolutionaryTrace" id="Q8YFD6"/>
<dbReference type="Proteomes" id="UP000000419">
    <property type="component" value="Chromosome I"/>
</dbReference>
<dbReference type="GO" id="GO:0047580">
    <property type="term" value="F:4-hydroxyproline epimerase activity"/>
    <property type="evidence" value="ECO:0007669"/>
    <property type="project" value="UniProtKB-EC"/>
</dbReference>
<dbReference type="GO" id="GO:0050346">
    <property type="term" value="F:trans-L-3-hydroxyproline dehydratase activity"/>
    <property type="evidence" value="ECO:0007669"/>
    <property type="project" value="UniProtKB-ARBA"/>
</dbReference>
<dbReference type="FunFam" id="3.10.310.10:FF:000010">
    <property type="entry name" value="Proline racemase"/>
    <property type="match status" value="1"/>
</dbReference>
<dbReference type="Gene3D" id="3.10.310.10">
    <property type="entry name" value="Diaminopimelate Epimerase, Chain A, domain 1"/>
    <property type="match status" value="2"/>
</dbReference>
<dbReference type="InterPro" id="IPR008794">
    <property type="entry name" value="Pro_racemase_fam"/>
</dbReference>
<dbReference type="NCBIfam" id="NF047722">
    <property type="entry name" value="T3LHypDht"/>
    <property type="match status" value="1"/>
</dbReference>
<dbReference type="PANTHER" id="PTHR33442:SF5">
    <property type="entry name" value="BIFUNCTIONAL TRANS-3-HYDROXY-L-PROLINE DEHYDRATASE_2-EPIMERASE"/>
    <property type="match status" value="1"/>
</dbReference>
<dbReference type="PANTHER" id="PTHR33442">
    <property type="entry name" value="TRANS-3-HYDROXY-L-PROLINE DEHYDRATASE"/>
    <property type="match status" value="1"/>
</dbReference>
<dbReference type="Pfam" id="PF05544">
    <property type="entry name" value="Pro_racemase"/>
    <property type="match status" value="1"/>
</dbReference>
<dbReference type="PIRSF" id="PIRSF029792">
    <property type="entry name" value="Pro_racemase"/>
    <property type="match status" value="1"/>
</dbReference>
<dbReference type="SFLD" id="SFLDS00028">
    <property type="entry name" value="Proline_Racemase"/>
    <property type="match status" value="1"/>
</dbReference>
<dbReference type="SUPFAM" id="SSF54506">
    <property type="entry name" value="Diaminopimelate epimerase-like"/>
    <property type="match status" value="1"/>
</dbReference>
<organism>
    <name type="scientific">Brucella melitensis biotype 1 (strain ATCC 23456 / CCUG 17765 / NCTC 10094 / 16M)</name>
    <dbReference type="NCBI Taxonomy" id="224914"/>
    <lineage>
        <taxon>Bacteria</taxon>
        <taxon>Pseudomonadati</taxon>
        <taxon>Pseudomonadota</taxon>
        <taxon>Alphaproteobacteria</taxon>
        <taxon>Hyphomicrobiales</taxon>
        <taxon>Brucellaceae</taxon>
        <taxon>Brucella/Ochrobactrum group</taxon>
        <taxon>Brucella</taxon>
    </lineage>
</organism>
<protein>
    <recommendedName>
        <fullName>Protein BMEI1586</fullName>
        <ecNumber evidence="4">5.1.1.8</ecNumber>
    </recommendedName>
</protein>
<comment type="function">
    <text evidence="3 4 6">In vitro, catalyzes the epimerization of trans-4-hydroxy-L-proline (t4LHyp) to cis-4-hydroxy-D-proline (c4DHyp) and that of trans-3-hydroxy-L-proline (t3LHyp) to cis-3-hydroxy-D-proline (c3DHyp), albeit with very low efficiency. The physiological substrate may be different (PubMed:24980702). Displays neither proline racemase activity nor t3LHyp dehydratase activity (PubMed:17849014, PubMed:24980702).</text>
</comment>
<comment type="catalytic activity">
    <reaction evidence="4">
        <text>trans-4-hydroxy-L-proline = cis-4-hydroxy-D-proline</text>
        <dbReference type="Rhea" id="RHEA:21152"/>
        <dbReference type="ChEBI" id="CHEBI:57690"/>
        <dbReference type="ChEBI" id="CHEBI:58375"/>
        <dbReference type="EC" id="5.1.1.8"/>
    </reaction>
</comment>
<comment type="biophysicochemical properties">
    <kinetics>
        <KM evidence="4">4.5 mM for trans-4-hydroxy-L-proline</KM>
        <KM evidence="4">2.6 mM for trans-3-hydroxy-L-proline</KM>
        <text evidence="4">kcat is 0.082 sec(-1) for t4LHyp epimerization. kcat is 0.085 sec(-1) for t3LHyp epimerization.</text>
    </kinetics>
</comment>
<comment type="subunit">
    <text evidence="2">Homotetramer.</text>
</comment>
<comment type="similarity">
    <text evidence="5">Belongs to the proline racemase family.</text>
</comment>
<keyword id="KW-0002">3D-structure</keyword>
<keyword id="KW-0413">Isomerase</keyword>